<evidence type="ECO:0000255" key="1">
    <source>
        <dbReference type="HAMAP-Rule" id="MF_00741"/>
    </source>
</evidence>
<organism>
    <name type="scientific">Saccharolobus solfataricus (strain ATCC 35092 / DSM 1617 / JCM 11322 / P2)</name>
    <name type="common">Sulfolobus solfataricus</name>
    <dbReference type="NCBI Taxonomy" id="273057"/>
    <lineage>
        <taxon>Archaea</taxon>
        <taxon>Thermoproteota</taxon>
        <taxon>Thermoprotei</taxon>
        <taxon>Sulfolobales</taxon>
        <taxon>Sulfolobaceae</taxon>
        <taxon>Saccharolobus</taxon>
    </lineage>
</organism>
<comment type="catalytic activity">
    <reaction evidence="1">
        <text>2-formamido-N(1)-(5-O-phospho-beta-D-ribosyl)acetamidine + ATP = 5-amino-1-(5-phospho-beta-D-ribosyl)imidazole + ADP + phosphate + H(+)</text>
        <dbReference type="Rhea" id="RHEA:23032"/>
        <dbReference type="ChEBI" id="CHEBI:15378"/>
        <dbReference type="ChEBI" id="CHEBI:30616"/>
        <dbReference type="ChEBI" id="CHEBI:43474"/>
        <dbReference type="ChEBI" id="CHEBI:137981"/>
        <dbReference type="ChEBI" id="CHEBI:147287"/>
        <dbReference type="ChEBI" id="CHEBI:456216"/>
        <dbReference type="EC" id="6.3.3.1"/>
    </reaction>
</comment>
<comment type="pathway">
    <text evidence="1">Purine metabolism; IMP biosynthesis via de novo pathway; 5-amino-1-(5-phospho-D-ribosyl)imidazole from N(2)-formyl-N(1)-(5-phospho-D-ribosyl)glycinamide: step 2/2.</text>
</comment>
<comment type="subcellular location">
    <subcellularLocation>
        <location evidence="1">Cytoplasm</location>
    </subcellularLocation>
</comment>
<comment type="similarity">
    <text evidence="1">Belongs to the AIR synthase family.</text>
</comment>
<name>PUR5_SACS2</name>
<dbReference type="EC" id="6.3.3.1" evidence="1"/>
<dbReference type="EMBL" id="Y18930">
    <property type="protein sequence ID" value="CAB57665.1"/>
    <property type="molecule type" value="Genomic_DNA"/>
</dbReference>
<dbReference type="EMBL" id="AE006641">
    <property type="protein sequence ID" value="AAK40944.1"/>
    <property type="molecule type" value="Genomic_DNA"/>
</dbReference>
<dbReference type="PIR" id="A99211">
    <property type="entry name" value="A99211"/>
</dbReference>
<dbReference type="RefSeq" id="WP_009991170.1">
    <property type="nucleotide sequence ID" value="NC_002754.1"/>
</dbReference>
<dbReference type="SMR" id="Q9UX29"/>
<dbReference type="FunCoup" id="Q9UX29">
    <property type="interactions" value="126"/>
</dbReference>
<dbReference type="STRING" id="273057.SSO0636"/>
<dbReference type="PaxDb" id="273057-SSO0636"/>
<dbReference type="EnsemblBacteria" id="AAK40944">
    <property type="protein sequence ID" value="AAK40944"/>
    <property type="gene ID" value="SSO0636"/>
</dbReference>
<dbReference type="GeneID" id="44129635"/>
<dbReference type="KEGG" id="sso:SSO0636"/>
<dbReference type="PATRIC" id="fig|273057.12.peg.640"/>
<dbReference type="eggNOG" id="arCOG00639">
    <property type="taxonomic scope" value="Archaea"/>
</dbReference>
<dbReference type="HOGENOM" id="CLU_047116_0_0_2"/>
<dbReference type="InParanoid" id="Q9UX29"/>
<dbReference type="PhylomeDB" id="Q9UX29"/>
<dbReference type="UniPathway" id="UPA00074">
    <property type="reaction ID" value="UER00129"/>
</dbReference>
<dbReference type="Proteomes" id="UP000001974">
    <property type="component" value="Chromosome"/>
</dbReference>
<dbReference type="GO" id="GO:0005829">
    <property type="term" value="C:cytosol"/>
    <property type="evidence" value="ECO:0000318"/>
    <property type="project" value="GO_Central"/>
</dbReference>
<dbReference type="GO" id="GO:0005524">
    <property type="term" value="F:ATP binding"/>
    <property type="evidence" value="ECO:0007669"/>
    <property type="project" value="UniProtKB-KW"/>
</dbReference>
<dbReference type="GO" id="GO:0004637">
    <property type="term" value="F:phosphoribosylamine-glycine ligase activity"/>
    <property type="evidence" value="ECO:0000318"/>
    <property type="project" value="GO_Central"/>
</dbReference>
<dbReference type="GO" id="GO:0004641">
    <property type="term" value="F:phosphoribosylformylglycinamidine cyclo-ligase activity"/>
    <property type="evidence" value="ECO:0000318"/>
    <property type="project" value="GO_Central"/>
</dbReference>
<dbReference type="GO" id="GO:0006189">
    <property type="term" value="P:'de novo' IMP biosynthetic process"/>
    <property type="evidence" value="ECO:0007669"/>
    <property type="project" value="UniProtKB-UniRule"/>
</dbReference>
<dbReference type="GO" id="GO:0046084">
    <property type="term" value="P:adenine biosynthetic process"/>
    <property type="evidence" value="ECO:0000318"/>
    <property type="project" value="GO_Central"/>
</dbReference>
<dbReference type="GO" id="GO:0006164">
    <property type="term" value="P:purine nucleotide biosynthetic process"/>
    <property type="evidence" value="ECO:0000318"/>
    <property type="project" value="GO_Central"/>
</dbReference>
<dbReference type="CDD" id="cd02196">
    <property type="entry name" value="PurM"/>
    <property type="match status" value="1"/>
</dbReference>
<dbReference type="FunFam" id="3.30.1330.10:FF:000020">
    <property type="entry name" value="Phosphoribosylformylglycinamidine cyclo-ligase"/>
    <property type="match status" value="1"/>
</dbReference>
<dbReference type="FunFam" id="3.90.650.10:FF:000011">
    <property type="entry name" value="Phosphoribosylformylglycinamidine cyclo-ligase"/>
    <property type="match status" value="1"/>
</dbReference>
<dbReference type="Gene3D" id="3.90.650.10">
    <property type="entry name" value="PurM-like C-terminal domain"/>
    <property type="match status" value="1"/>
</dbReference>
<dbReference type="Gene3D" id="3.30.1330.10">
    <property type="entry name" value="PurM-like, N-terminal domain"/>
    <property type="match status" value="1"/>
</dbReference>
<dbReference type="HAMAP" id="MF_00741">
    <property type="entry name" value="AIRS"/>
    <property type="match status" value="1"/>
</dbReference>
<dbReference type="InterPro" id="IPR010918">
    <property type="entry name" value="PurM-like_C_dom"/>
</dbReference>
<dbReference type="InterPro" id="IPR036676">
    <property type="entry name" value="PurM-like_C_sf"/>
</dbReference>
<dbReference type="InterPro" id="IPR016188">
    <property type="entry name" value="PurM-like_N"/>
</dbReference>
<dbReference type="InterPro" id="IPR036921">
    <property type="entry name" value="PurM-like_N_sf"/>
</dbReference>
<dbReference type="InterPro" id="IPR004733">
    <property type="entry name" value="PurM_cligase"/>
</dbReference>
<dbReference type="NCBIfam" id="TIGR00878">
    <property type="entry name" value="purM"/>
    <property type="match status" value="1"/>
</dbReference>
<dbReference type="PANTHER" id="PTHR10520:SF12">
    <property type="entry name" value="TRIFUNCTIONAL PURINE BIOSYNTHETIC PROTEIN ADENOSINE-3"/>
    <property type="match status" value="1"/>
</dbReference>
<dbReference type="PANTHER" id="PTHR10520">
    <property type="entry name" value="TRIFUNCTIONAL PURINE BIOSYNTHETIC PROTEIN ADENOSINE-3-RELATED"/>
    <property type="match status" value="1"/>
</dbReference>
<dbReference type="Pfam" id="PF00586">
    <property type="entry name" value="AIRS"/>
    <property type="match status" value="1"/>
</dbReference>
<dbReference type="Pfam" id="PF02769">
    <property type="entry name" value="AIRS_C"/>
    <property type="match status" value="1"/>
</dbReference>
<dbReference type="SUPFAM" id="SSF56042">
    <property type="entry name" value="PurM C-terminal domain-like"/>
    <property type="match status" value="1"/>
</dbReference>
<dbReference type="SUPFAM" id="SSF55326">
    <property type="entry name" value="PurM N-terminal domain-like"/>
    <property type="match status" value="1"/>
</dbReference>
<keyword id="KW-0067">ATP-binding</keyword>
<keyword id="KW-0963">Cytoplasm</keyword>
<keyword id="KW-0436">Ligase</keyword>
<keyword id="KW-0547">Nucleotide-binding</keyword>
<keyword id="KW-0658">Purine biosynthesis</keyword>
<keyword id="KW-1185">Reference proteome</keyword>
<accession>Q9UX29</accession>
<reference key="1">
    <citation type="journal article" date="2000" name="Genome">
        <title>Gene content and organization of a 281-kbp contig from the genome of the extremely thermophilic archaeon, Sulfolobus solfataricus P2.</title>
        <authorList>
            <person name="Charlebois R.L."/>
            <person name="Singh R.K."/>
            <person name="Chan-Weiher C.C.-Y."/>
            <person name="Allard G."/>
            <person name="Chow C."/>
            <person name="Confalonieri F."/>
            <person name="Curtis B."/>
            <person name="Duguet M."/>
            <person name="Erauso G."/>
            <person name="Faguy D."/>
            <person name="Gaasterland T."/>
            <person name="Garrett R.A."/>
            <person name="Gordon P."/>
            <person name="Jeffries A.C."/>
            <person name="Kozera C."/>
            <person name="Kushwaha N."/>
            <person name="Lafleur E."/>
            <person name="Medina N."/>
            <person name="Peng X."/>
            <person name="Penny S.L."/>
            <person name="She Q."/>
            <person name="St Jean A."/>
            <person name="van der Oost J."/>
            <person name="Young F."/>
            <person name="Zivanovic Y."/>
            <person name="Doolittle W.F."/>
            <person name="Ragan M.A."/>
            <person name="Sensen C.W."/>
        </authorList>
    </citation>
    <scope>NUCLEOTIDE SEQUENCE [LARGE SCALE GENOMIC DNA]</scope>
    <source>
        <strain>ATCC 35092 / DSM 1617 / JCM 11322 / P2</strain>
    </source>
</reference>
<reference key="2">
    <citation type="journal article" date="2001" name="Proc. Natl. Acad. Sci. U.S.A.">
        <title>The complete genome of the crenarchaeon Sulfolobus solfataricus P2.</title>
        <authorList>
            <person name="She Q."/>
            <person name="Singh R.K."/>
            <person name="Confalonieri F."/>
            <person name="Zivanovic Y."/>
            <person name="Allard G."/>
            <person name="Awayez M.J."/>
            <person name="Chan-Weiher C.C.-Y."/>
            <person name="Clausen I.G."/>
            <person name="Curtis B.A."/>
            <person name="De Moors A."/>
            <person name="Erauso G."/>
            <person name="Fletcher C."/>
            <person name="Gordon P.M.K."/>
            <person name="Heikamp-de Jong I."/>
            <person name="Jeffries A.C."/>
            <person name="Kozera C.J."/>
            <person name="Medina N."/>
            <person name="Peng X."/>
            <person name="Thi-Ngoc H.P."/>
            <person name="Redder P."/>
            <person name="Schenk M.E."/>
            <person name="Theriault C."/>
            <person name="Tolstrup N."/>
            <person name="Charlebois R.L."/>
            <person name="Doolittle W.F."/>
            <person name="Duguet M."/>
            <person name="Gaasterland T."/>
            <person name="Garrett R.A."/>
            <person name="Ragan M.A."/>
            <person name="Sensen C.W."/>
            <person name="Van der Oost J."/>
        </authorList>
    </citation>
    <scope>NUCLEOTIDE SEQUENCE [LARGE SCALE GENOMIC DNA]</scope>
    <source>
        <strain>ATCC 35092 / DSM 1617 / JCM 11322 / P2</strain>
    </source>
</reference>
<sequence>MVSEEYKKAGVDLEKLRNYHNMISQIISSTYKNTIIGAGHYSGVIKIGSLNIAMHTDGVGTKTFLALQTRIIKPVGIDCVAMNVNDLICVGAKPVALVDYIALERPMDNVVNEIIDGIVQGAKEADVEVIGGETAIMPDVIRGFDLSCTAIGVVDKLKTGAEIRPGDYVLGLESSGIHANGYSLVRKLIEEGKLSLDEYKNELLKPTKIYVKPILEVMNMIKGAAHVTGGAFSKLKRLTSYKIVLNMPDPPQIFKTIEKAGVAHEEMYKVFNMGIGIVLFVSEELMKEVKTKLEGYGTVYELGRVYNGNGITIKTYKNEILRL</sequence>
<feature type="chain" id="PRO_0000148289" description="Phosphoribosylformylglycinamidine cyclo-ligase">
    <location>
        <begin position="1"/>
        <end position="323"/>
    </location>
</feature>
<protein>
    <recommendedName>
        <fullName evidence="1">Phosphoribosylformylglycinamidine cyclo-ligase</fullName>
        <ecNumber evidence="1">6.3.3.1</ecNumber>
    </recommendedName>
    <alternativeName>
        <fullName evidence="1">AIR synthase</fullName>
    </alternativeName>
    <alternativeName>
        <fullName evidence="1">AIRS</fullName>
    </alternativeName>
    <alternativeName>
        <fullName evidence="1">Phosphoribosyl-aminoimidazole synthetase</fullName>
    </alternativeName>
</protein>
<gene>
    <name evidence="1" type="primary">purM</name>
    <name type="ordered locus">SSO0636</name>
    <name type="ORF">C08_014</name>
</gene>
<proteinExistence type="inferred from homology"/>